<feature type="chain" id="PRO_0000256848" description="PRA1 family protein 3">
    <location>
        <begin position="1"/>
        <end position="188"/>
    </location>
</feature>
<feature type="topological domain" description="Cytoplasmic" evidence="1">
    <location>
        <begin position="1"/>
        <end position="35"/>
    </location>
</feature>
<feature type="transmembrane region" description="Helical" evidence="5">
    <location>
        <begin position="36"/>
        <end position="56"/>
    </location>
</feature>
<feature type="transmembrane region" description="Helical" evidence="5">
    <location>
        <begin position="57"/>
        <end position="77"/>
    </location>
</feature>
<feature type="topological domain" description="Cytoplasmic" evidence="1">
    <location>
        <begin position="78"/>
        <end position="93"/>
    </location>
</feature>
<feature type="transmembrane region" description="Helical" evidence="5">
    <location>
        <begin position="94"/>
        <end position="114"/>
    </location>
</feature>
<feature type="transmembrane region" description="Helical" evidence="5">
    <location>
        <begin position="115"/>
        <end position="135"/>
    </location>
</feature>
<feature type="topological domain" description="Cytoplasmic" evidence="1">
    <location>
        <begin position="136"/>
        <end position="188"/>
    </location>
</feature>
<feature type="region of interest" description="Required for homodimer formation and heterodimer formation with ARL6IP1" evidence="3">
    <location>
        <begin position="103"/>
        <end position="117"/>
    </location>
</feature>
<feature type="region of interest" description="Targeting to endoplasmic reticulum membrane" evidence="4">
    <location>
        <begin position="136"/>
        <end position="188"/>
    </location>
</feature>
<feature type="modified residue" description="N-acetylmethionine" evidence="2">
    <location>
        <position position="1"/>
    </location>
</feature>
<reference key="1">
    <citation type="submission" date="2005-06" db="EMBL/GenBank/DDBJ databases">
        <title>DNA sequences of macaque genes expressed in brain or testis and its evolutionary implications.</title>
        <authorList>
            <consortium name="International consortium for macaque cDNA sequencing and analysis"/>
        </authorList>
    </citation>
    <scope>NUCLEOTIDE SEQUENCE [LARGE SCALE MRNA]</scope>
    <source>
        <tissue>Parietal cortex</tissue>
    </source>
</reference>
<evidence type="ECO:0000250" key="1"/>
<evidence type="ECO:0000250" key="2">
    <source>
        <dbReference type="UniProtKB" id="O75915"/>
    </source>
</evidence>
<evidence type="ECO:0000250" key="3">
    <source>
        <dbReference type="UniProtKB" id="Q8R5J9"/>
    </source>
</evidence>
<evidence type="ECO:0000250" key="4">
    <source>
        <dbReference type="UniProtKB" id="Q9ES40"/>
    </source>
</evidence>
<evidence type="ECO:0000255" key="5"/>
<evidence type="ECO:0000305" key="6"/>
<comment type="function">
    <text evidence="3 4">Regulates intracellular concentrations of taurine and glutamate. Negatively modulates SLC1A1/EAAC1 glutamate transport activity by decreasing its affinity for glutamate in a PKC activity-dependent manner. Plays a role in the retention of SLC1A1/EAAC1 in the endoplasmic reticulum.</text>
</comment>
<comment type="subunit">
    <text evidence="3 4">Homodimer. Heterodimer with ARL6IP1. Forms multimers. Interacts with ARL6. Interacts with prenylated RAB1A and RAB3A. Interacts with SLC1A1/EAAC1. Interacts with RTN2 (via first transmembrane domain). Does not interact with VAMP1, VAMP2 or VAMP3.</text>
</comment>
<comment type="subcellular location">
    <subcellularLocation>
        <location evidence="4">Endoplasmic reticulum membrane</location>
        <topology evidence="5">Multi-pass membrane protein</topology>
    </subcellularLocation>
    <subcellularLocation>
        <location evidence="4">Cell membrane</location>
        <topology evidence="5">Multi-pass membrane protein</topology>
    </subcellularLocation>
    <subcellularLocation>
        <location evidence="4">Cytoplasm</location>
    </subcellularLocation>
    <subcellularLocation>
        <location evidence="4">Cytoplasm</location>
        <location evidence="4">Cytoskeleton</location>
    </subcellularLocation>
    <text evidence="4">Also exists as a soluble form in the cytoplasm. Associated with microtubules.</text>
</comment>
<comment type="similarity">
    <text evidence="6">Belongs to the PRA1 family.</text>
</comment>
<dbReference type="EMBL" id="AB169830">
    <property type="protein sequence ID" value="BAE01911.1"/>
    <property type="molecule type" value="mRNA"/>
</dbReference>
<dbReference type="RefSeq" id="NP_001272079.1">
    <property type="nucleotide sequence ID" value="NM_001285150.1"/>
</dbReference>
<dbReference type="STRING" id="9541.ENSMFAP00000003708"/>
<dbReference type="eggNOG" id="KOG4050">
    <property type="taxonomic scope" value="Eukaryota"/>
</dbReference>
<dbReference type="Proteomes" id="UP000233100">
    <property type="component" value="Unplaced"/>
</dbReference>
<dbReference type="GO" id="GO:0005856">
    <property type="term" value="C:cytoskeleton"/>
    <property type="evidence" value="ECO:0007669"/>
    <property type="project" value="UniProtKB-SubCell"/>
</dbReference>
<dbReference type="GO" id="GO:0005789">
    <property type="term" value="C:endoplasmic reticulum membrane"/>
    <property type="evidence" value="ECO:0007669"/>
    <property type="project" value="UniProtKB-SubCell"/>
</dbReference>
<dbReference type="GO" id="GO:0005886">
    <property type="term" value="C:plasma membrane"/>
    <property type="evidence" value="ECO:0007669"/>
    <property type="project" value="UniProtKB-SubCell"/>
</dbReference>
<dbReference type="GO" id="GO:0002037">
    <property type="term" value="P:negative regulation of L-glutamate import across plasma membrane"/>
    <property type="evidence" value="ECO:0000250"/>
    <property type="project" value="UniProtKB"/>
</dbReference>
<dbReference type="InterPro" id="IPR004895">
    <property type="entry name" value="Prenylated_rab_accept_PRA1"/>
</dbReference>
<dbReference type="PANTHER" id="PTHR12859:SF2">
    <property type="entry name" value="PRA1 FAMILY PROTEIN 3"/>
    <property type="match status" value="1"/>
</dbReference>
<dbReference type="PANTHER" id="PTHR12859">
    <property type="entry name" value="PRA1 PROTEIN"/>
    <property type="match status" value="1"/>
</dbReference>
<dbReference type="Pfam" id="PF03208">
    <property type="entry name" value="PRA1"/>
    <property type="match status" value="1"/>
</dbReference>
<proteinExistence type="evidence at transcript level"/>
<gene>
    <name type="primary">ARL6IP5</name>
    <name type="synonym">PRAF3</name>
    <name type="ORF">QnpA-10140</name>
</gene>
<sequence>MDVNIAPLRAWDDFFPGSDRFAQPDFRDISKWNNRVVSNLLYYQTNYLVVAAMMISVVGFLSPFNMILGGIVVVLVFTGFVWAAHNKDALRRLKKRYPTTFVMVVMLASYFLISMFGGVMVFVFGITFPLLLMFIHASLRLRNLKNKLENKMEGIGLKRTPMGIVLDALEQQEEGINRLTDYISKVKE</sequence>
<accession>Q4R4R4</accession>
<protein>
    <recommendedName>
        <fullName>PRA1 family protein 3</fullName>
    </recommendedName>
    <alternativeName>
        <fullName>ADP-ribosylation factor-like protein 6-interacting protein 5</fullName>
        <shortName>ARL-6-interacting protein 5</shortName>
        <shortName>Aip-5</shortName>
    </alternativeName>
</protein>
<name>PRAF3_MACFA</name>
<keyword id="KW-0007">Acetylation</keyword>
<keyword id="KW-1003">Cell membrane</keyword>
<keyword id="KW-0963">Cytoplasm</keyword>
<keyword id="KW-0206">Cytoskeleton</keyword>
<keyword id="KW-0256">Endoplasmic reticulum</keyword>
<keyword id="KW-0472">Membrane</keyword>
<keyword id="KW-1185">Reference proteome</keyword>
<keyword id="KW-0812">Transmembrane</keyword>
<keyword id="KW-1133">Transmembrane helix</keyword>
<organism>
    <name type="scientific">Macaca fascicularis</name>
    <name type="common">Crab-eating macaque</name>
    <name type="synonym">Cynomolgus monkey</name>
    <dbReference type="NCBI Taxonomy" id="9541"/>
    <lineage>
        <taxon>Eukaryota</taxon>
        <taxon>Metazoa</taxon>
        <taxon>Chordata</taxon>
        <taxon>Craniata</taxon>
        <taxon>Vertebrata</taxon>
        <taxon>Euteleostomi</taxon>
        <taxon>Mammalia</taxon>
        <taxon>Eutheria</taxon>
        <taxon>Euarchontoglires</taxon>
        <taxon>Primates</taxon>
        <taxon>Haplorrhini</taxon>
        <taxon>Catarrhini</taxon>
        <taxon>Cercopithecidae</taxon>
        <taxon>Cercopithecinae</taxon>
        <taxon>Macaca</taxon>
    </lineage>
</organism>